<evidence type="ECO:0000250" key="1">
    <source>
        <dbReference type="UniProtKB" id="P32458"/>
    </source>
</evidence>
<evidence type="ECO:0000250" key="2">
    <source>
        <dbReference type="UniProtKB" id="Q9UH03"/>
    </source>
</evidence>
<evidence type="ECO:0000255" key="3"/>
<evidence type="ECO:0000255" key="4">
    <source>
        <dbReference type="PROSITE-ProRule" id="PRU01056"/>
    </source>
</evidence>
<evidence type="ECO:0000256" key="5">
    <source>
        <dbReference type="SAM" id="MobiDB-lite"/>
    </source>
</evidence>
<evidence type="ECO:0000269" key="6">
    <source>
    </source>
</evidence>
<evidence type="ECO:0000269" key="7">
    <source>
    </source>
</evidence>
<evidence type="ECO:0000269" key="8">
    <source>
    </source>
</evidence>
<evidence type="ECO:0000269" key="9">
    <source>
    </source>
</evidence>
<evidence type="ECO:0000269" key="10">
    <source>
    </source>
</evidence>
<evidence type="ECO:0000269" key="11">
    <source>
    </source>
</evidence>
<evidence type="ECO:0000269" key="12">
    <source>
    </source>
</evidence>
<evidence type="ECO:0000269" key="13">
    <source>
    </source>
</evidence>
<evidence type="ECO:0000269" key="14">
    <source>
    </source>
</evidence>
<evidence type="ECO:0000303" key="15">
    <source>
    </source>
</evidence>
<evidence type="ECO:0000305" key="16"/>
<evidence type="ECO:0007744" key="17">
    <source>
    </source>
</evidence>
<evidence type="ECO:0007744" key="18">
    <source>
    </source>
</evidence>
<evidence type="ECO:0007744" key="19">
    <source>
    </source>
</evidence>
<evidence type="ECO:0007744" key="20">
    <source>
    </source>
</evidence>
<evidence type="ECO:0007744" key="21">
    <source>
    </source>
</evidence>
<evidence type="ECO:0007829" key="22">
    <source>
        <dbReference type="PDB" id="8PFH"/>
    </source>
</evidence>
<sequence>MSTASTPPINLFRRKKEHKRGITYTMLLCGPAGTGKTAFANNLLETKIFPHKYQYGKSNASISSNPEVKVIAPTKVVSFNSKNGIPSYVSEFDPMRANLEPGITITSTSLELGGNKDQGKPEMNEDDTVFFNLIMTHGIGENLDDSLCSEEVMSYLEQQFDIVLAEETRIKRNPRFEDTRVHVALYFIEPTGHGLREVDVELMKSISKYTNVLPIITRADSFTKEELTQFRKNIMFDVERYNVPIYKFEVDPEDDDLESMEENQALASLQPFAIITSDTRDSEGRYVREYPWGIISIDDDKISDLKVLKNVLFGSHLQEFKDTTQNLLYENYRSEKLSSVANAEEIGPNSTKRQSNAPSLSNFASLISTGQFNSSQTLANNLRADTPRNQVSGNFKENEYEDNGEHDSAENEQEMSPVRQLGREIKQENENLIRSIKTESSPKFLNSPDLPERTKLRNISETVPYVLRHERILARQQKLEELEAQSAKELQKRIQELERKAHELKLREKLINQNKLNGSSSSINSLQQSTRSQIKKNDTYTDLASIASGRD</sequence>
<dbReference type="EMBL" id="Z74273">
    <property type="protein sequence ID" value="CAA98804.1"/>
    <property type="molecule type" value="Genomic_DNA"/>
</dbReference>
<dbReference type="EMBL" id="BK006938">
    <property type="protein sequence ID" value="DAA11640.1"/>
    <property type="molecule type" value="Genomic_DNA"/>
</dbReference>
<dbReference type="PIR" id="S67788">
    <property type="entry name" value="S67788"/>
</dbReference>
<dbReference type="RefSeq" id="NP_010056.1">
    <property type="nucleotide sequence ID" value="NM_001180285.1"/>
</dbReference>
<dbReference type="PDB" id="8PFH">
    <property type="method" value="X-ray"/>
    <property type="resolution" value="3.24 A"/>
    <property type="chains" value="D=21-339"/>
</dbReference>
<dbReference type="PDB" id="9GD4">
    <property type="method" value="X-ray"/>
    <property type="resolution" value="2.04 A"/>
    <property type="chains" value="D=21-339"/>
</dbReference>
<dbReference type="PDBsum" id="8PFH"/>
<dbReference type="PDBsum" id="9GD4"/>
<dbReference type="SMR" id="Q07657"/>
<dbReference type="BioGRID" id="31885">
    <property type="interactions" value="280"/>
</dbReference>
<dbReference type="ComplexPortal" id="CPX-1675">
    <property type="entry name" value="Septin complex"/>
</dbReference>
<dbReference type="ComplexPortal" id="CPX-1712">
    <property type="entry name" value="Gin4 serine/threonine kinase complex"/>
</dbReference>
<dbReference type="DIP" id="DIP-5596N"/>
<dbReference type="ELM" id="Q07657"/>
<dbReference type="FunCoup" id="Q07657">
    <property type="interactions" value="243"/>
</dbReference>
<dbReference type="IntAct" id="Q07657">
    <property type="interactions" value="55"/>
</dbReference>
<dbReference type="MINT" id="Q07657"/>
<dbReference type="STRING" id="4932.YDL225W"/>
<dbReference type="iPTMnet" id="Q07657"/>
<dbReference type="PaxDb" id="4932-YDL225W"/>
<dbReference type="PeptideAtlas" id="Q07657"/>
<dbReference type="EnsemblFungi" id="YDL225W_mRNA">
    <property type="protein sequence ID" value="YDL225W"/>
    <property type="gene ID" value="YDL225W"/>
</dbReference>
<dbReference type="GeneID" id="851373"/>
<dbReference type="KEGG" id="sce:YDL225W"/>
<dbReference type="AGR" id="SGD:S000002384"/>
<dbReference type="SGD" id="S000002384">
    <property type="gene designation" value="SHS1"/>
</dbReference>
<dbReference type="VEuPathDB" id="FungiDB:YDL225W"/>
<dbReference type="eggNOG" id="KOG2655">
    <property type="taxonomic scope" value="Eukaryota"/>
</dbReference>
<dbReference type="HOGENOM" id="CLU_017718_7_4_1"/>
<dbReference type="InParanoid" id="Q07657"/>
<dbReference type="OMA" id="IQECKFL"/>
<dbReference type="OrthoDB" id="416553at2759"/>
<dbReference type="BioCyc" id="YEAST:G3O-29605-MONOMER"/>
<dbReference type="BioGRID-ORCS" id="851373">
    <property type="hits" value="0 hits in 10 CRISPR screens"/>
</dbReference>
<dbReference type="PRO" id="PR:Q07657"/>
<dbReference type="Proteomes" id="UP000002311">
    <property type="component" value="Chromosome IV"/>
</dbReference>
<dbReference type="RNAct" id="Q07657">
    <property type="molecule type" value="protein"/>
</dbReference>
<dbReference type="GO" id="GO:0005619">
    <property type="term" value="C:ascospore wall"/>
    <property type="evidence" value="ECO:0000303"/>
    <property type="project" value="ComplexPortal"/>
</dbReference>
<dbReference type="GO" id="GO:0032153">
    <property type="term" value="C:cell division site"/>
    <property type="evidence" value="ECO:0000318"/>
    <property type="project" value="GO_Central"/>
</dbReference>
<dbReference type="GO" id="GO:0005935">
    <property type="term" value="C:cellular bud neck"/>
    <property type="evidence" value="ECO:0000353"/>
    <property type="project" value="SGD"/>
</dbReference>
<dbReference type="GO" id="GO:0000144">
    <property type="term" value="C:cellular bud neck septin ring"/>
    <property type="evidence" value="ECO:0000314"/>
    <property type="project" value="SGD"/>
</dbReference>
<dbReference type="GO" id="GO:0005829">
    <property type="term" value="C:cytosol"/>
    <property type="evidence" value="ECO:0000318"/>
    <property type="project" value="GO_Central"/>
</dbReference>
<dbReference type="GO" id="GO:1990317">
    <property type="term" value="C:Gin4 complex"/>
    <property type="evidence" value="ECO:0000353"/>
    <property type="project" value="ComplexPortal"/>
</dbReference>
<dbReference type="GO" id="GO:0043332">
    <property type="term" value="C:mating projection tip"/>
    <property type="evidence" value="ECO:0007005"/>
    <property type="project" value="SGD"/>
</dbReference>
<dbReference type="GO" id="GO:0015630">
    <property type="term" value="C:microtubule cytoskeleton"/>
    <property type="evidence" value="ECO:0000318"/>
    <property type="project" value="GO_Central"/>
</dbReference>
<dbReference type="GO" id="GO:0005628">
    <property type="term" value="C:prospore membrane"/>
    <property type="evidence" value="ECO:0007005"/>
    <property type="project" value="SGD"/>
</dbReference>
<dbReference type="GO" id="GO:0031105">
    <property type="term" value="C:septin complex"/>
    <property type="evidence" value="ECO:0000353"/>
    <property type="project" value="ComplexPortal"/>
</dbReference>
<dbReference type="GO" id="GO:0005940">
    <property type="term" value="C:septin ring"/>
    <property type="evidence" value="ECO:0000318"/>
    <property type="project" value="GO_Central"/>
</dbReference>
<dbReference type="GO" id="GO:0005525">
    <property type="term" value="F:GTP binding"/>
    <property type="evidence" value="ECO:0000314"/>
    <property type="project" value="SGD"/>
</dbReference>
<dbReference type="GO" id="GO:0003924">
    <property type="term" value="F:GTPase activity"/>
    <property type="evidence" value="ECO:0000318"/>
    <property type="project" value="GO_Central"/>
</dbReference>
<dbReference type="GO" id="GO:0060090">
    <property type="term" value="F:molecular adaptor activity"/>
    <property type="evidence" value="ECO:0000318"/>
    <property type="project" value="GO_Central"/>
</dbReference>
<dbReference type="GO" id="GO:0005200">
    <property type="term" value="F:structural constituent of cytoskeleton"/>
    <property type="evidence" value="ECO:0000314"/>
    <property type="project" value="SGD"/>
</dbReference>
<dbReference type="GO" id="GO:0000915">
    <property type="term" value="P:actomyosin contractile ring assembly"/>
    <property type="evidence" value="ECO:0000318"/>
    <property type="project" value="GO_Central"/>
</dbReference>
<dbReference type="GO" id="GO:0032186">
    <property type="term" value="P:cellular bud neck septin ring organization"/>
    <property type="evidence" value="ECO:0000315"/>
    <property type="project" value="SGD"/>
</dbReference>
<dbReference type="GO" id="GO:0061640">
    <property type="term" value="P:cytoskeleton-dependent cytokinesis"/>
    <property type="evidence" value="ECO:0000318"/>
    <property type="project" value="GO_Central"/>
</dbReference>
<dbReference type="GO" id="GO:0000917">
    <property type="term" value="P:division septum assembly"/>
    <property type="evidence" value="ECO:0000315"/>
    <property type="project" value="SGD"/>
</dbReference>
<dbReference type="GO" id="GO:0061163">
    <property type="term" value="P:endoplasmic reticulum polarization"/>
    <property type="evidence" value="ECO:0000314"/>
    <property type="project" value="SGD"/>
</dbReference>
<dbReference type="GO" id="GO:0010458">
    <property type="term" value="P:exit from mitosis"/>
    <property type="evidence" value="ECO:0000315"/>
    <property type="project" value="SGD"/>
</dbReference>
<dbReference type="GO" id="GO:0000082">
    <property type="term" value="P:G1/S transition of mitotic cell cycle"/>
    <property type="evidence" value="ECO:0000316"/>
    <property type="project" value="SGD"/>
</dbReference>
<dbReference type="GO" id="GO:1903475">
    <property type="term" value="P:mitotic actomyosin contractile ring assembly"/>
    <property type="evidence" value="ECO:0000315"/>
    <property type="project" value="SGD"/>
</dbReference>
<dbReference type="GO" id="GO:0097271">
    <property type="term" value="P:protein localization to bud neck"/>
    <property type="evidence" value="ECO:0000316"/>
    <property type="project" value="SGD"/>
</dbReference>
<dbReference type="GO" id="GO:0000921">
    <property type="term" value="P:septin ring assembly"/>
    <property type="evidence" value="ECO:0000316"/>
    <property type="project" value="SGD"/>
</dbReference>
<dbReference type="GO" id="GO:0000920">
    <property type="term" value="P:septum digestion after cytokinesis"/>
    <property type="evidence" value="ECO:0000303"/>
    <property type="project" value="ComplexPortal"/>
</dbReference>
<dbReference type="CDD" id="cd01850">
    <property type="entry name" value="CDC_Septin"/>
    <property type="match status" value="1"/>
</dbReference>
<dbReference type="Gene3D" id="3.40.50.300">
    <property type="entry name" value="P-loop containing nucleotide triphosphate hydrolases"/>
    <property type="match status" value="1"/>
</dbReference>
<dbReference type="InterPro" id="IPR030379">
    <property type="entry name" value="G_SEPTIN_dom"/>
</dbReference>
<dbReference type="InterPro" id="IPR027417">
    <property type="entry name" value="P-loop_NTPase"/>
</dbReference>
<dbReference type="InterPro" id="IPR016491">
    <property type="entry name" value="Septin"/>
</dbReference>
<dbReference type="PANTHER" id="PTHR18884">
    <property type="entry name" value="SEPTIN"/>
    <property type="match status" value="1"/>
</dbReference>
<dbReference type="Pfam" id="PF00735">
    <property type="entry name" value="Septin"/>
    <property type="match status" value="1"/>
</dbReference>
<dbReference type="PIRSF" id="PIRSF006698">
    <property type="entry name" value="Septin"/>
    <property type="match status" value="1"/>
</dbReference>
<dbReference type="SUPFAM" id="SSF52540">
    <property type="entry name" value="P-loop containing nucleoside triphosphate hydrolases"/>
    <property type="match status" value="1"/>
</dbReference>
<dbReference type="PROSITE" id="PS51719">
    <property type="entry name" value="G_SEPTIN"/>
    <property type="match status" value="1"/>
</dbReference>
<reference key="1">
    <citation type="journal article" date="1997" name="Nature">
        <title>The nucleotide sequence of Saccharomyces cerevisiae chromosome IV.</title>
        <authorList>
            <person name="Jacq C."/>
            <person name="Alt-Moerbe J."/>
            <person name="Andre B."/>
            <person name="Arnold W."/>
            <person name="Bahr A."/>
            <person name="Ballesta J.P.G."/>
            <person name="Bargues M."/>
            <person name="Baron L."/>
            <person name="Becker A."/>
            <person name="Biteau N."/>
            <person name="Bloecker H."/>
            <person name="Blugeon C."/>
            <person name="Boskovic J."/>
            <person name="Brandt P."/>
            <person name="Brueckner M."/>
            <person name="Buitrago M.J."/>
            <person name="Coster F."/>
            <person name="Delaveau T."/>
            <person name="del Rey F."/>
            <person name="Dujon B."/>
            <person name="Eide L.G."/>
            <person name="Garcia-Cantalejo J.M."/>
            <person name="Goffeau A."/>
            <person name="Gomez-Peris A."/>
            <person name="Granotier C."/>
            <person name="Hanemann V."/>
            <person name="Hankeln T."/>
            <person name="Hoheisel J.D."/>
            <person name="Jaeger W."/>
            <person name="Jimenez A."/>
            <person name="Jonniaux J.-L."/>
            <person name="Kraemer C."/>
            <person name="Kuester H."/>
            <person name="Laamanen P."/>
            <person name="Legros Y."/>
            <person name="Louis E.J."/>
            <person name="Moeller-Rieker S."/>
            <person name="Monnet A."/>
            <person name="Moro M."/>
            <person name="Mueller-Auer S."/>
            <person name="Nussbaumer B."/>
            <person name="Paricio N."/>
            <person name="Paulin L."/>
            <person name="Perea J."/>
            <person name="Perez-Alonso M."/>
            <person name="Perez-Ortin J.E."/>
            <person name="Pohl T.M."/>
            <person name="Prydz H."/>
            <person name="Purnelle B."/>
            <person name="Rasmussen S.W."/>
            <person name="Remacha M.A."/>
            <person name="Revuelta J.L."/>
            <person name="Rieger M."/>
            <person name="Salom D."/>
            <person name="Saluz H.P."/>
            <person name="Saiz J.E."/>
            <person name="Saren A.-M."/>
            <person name="Schaefer M."/>
            <person name="Scharfe M."/>
            <person name="Schmidt E.R."/>
            <person name="Schneider C."/>
            <person name="Scholler P."/>
            <person name="Schwarz S."/>
            <person name="Soler-Mira A."/>
            <person name="Urrestarazu L.A."/>
            <person name="Verhasselt P."/>
            <person name="Vissers S."/>
            <person name="Voet M."/>
            <person name="Volckaert G."/>
            <person name="Wagner G."/>
            <person name="Wambutt R."/>
            <person name="Wedler E."/>
            <person name="Wedler H."/>
            <person name="Woelfl S."/>
            <person name="Harris D.E."/>
            <person name="Bowman S."/>
            <person name="Brown D."/>
            <person name="Churcher C.M."/>
            <person name="Connor R."/>
            <person name="Dedman K."/>
            <person name="Gentles S."/>
            <person name="Hamlin N."/>
            <person name="Hunt S."/>
            <person name="Jones L."/>
            <person name="McDonald S."/>
            <person name="Murphy L.D."/>
            <person name="Niblett D."/>
            <person name="Odell C."/>
            <person name="Oliver K."/>
            <person name="Rajandream M.A."/>
            <person name="Richards C."/>
            <person name="Shore L."/>
            <person name="Walsh S.V."/>
            <person name="Barrell B.G."/>
            <person name="Dietrich F.S."/>
            <person name="Mulligan J.T."/>
            <person name="Allen E."/>
            <person name="Araujo R."/>
            <person name="Aviles E."/>
            <person name="Berno A."/>
            <person name="Carpenter J."/>
            <person name="Chen E."/>
            <person name="Cherry J.M."/>
            <person name="Chung E."/>
            <person name="Duncan M."/>
            <person name="Hunicke-Smith S."/>
            <person name="Hyman R.W."/>
            <person name="Komp C."/>
            <person name="Lashkari D."/>
            <person name="Lew H."/>
            <person name="Lin D."/>
            <person name="Mosedale D."/>
            <person name="Nakahara K."/>
            <person name="Namath A."/>
            <person name="Oefner P."/>
            <person name="Oh C."/>
            <person name="Petel F.X."/>
            <person name="Roberts D."/>
            <person name="Schramm S."/>
            <person name="Schroeder M."/>
            <person name="Shogren T."/>
            <person name="Shroff N."/>
            <person name="Winant A."/>
            <person name="Yelton M.A."/>
            <person name="Botstein D."/>
            <person name="Davis R.W."/>
            <person name="Johnston M."/>
            <person name="Andrews S."/>
            <person name="Brinkman R."/>
            <person name="Cooper J."/>
            <person name="Ding H."/>
            <person name="Du Z."/>
            <person name="Favello A."/>
            <person name="Fulton L."/>
            <person name="Gattung S."/>
            <person name="Greco T."/>
            <person name="Hallsworth K."/>
            <person name="Hawkins J."/>
            <person name="Hillier L.W."/>
            <person name="Jier M."/>
            <person name="Johnson D."/>
            <person name="Johnston L."/>
            <person name="Kirsten J."/>
            <person name="Kucaba T."/>
            <person name="Langston Y."/>
            <person name="Latreille P."/>
            <person name="Le T."/>
            <person name="Mardis E."/>
            <person name="Menezes S."/>
            <person name="Miller N."/>
            <person name="Nhan M."/>
            <person name="Pauley A."/>
            <person name="Peluso D."/>
            <person name="Rifkin L."/>
            <person name="Riles L."/>
            <person name="Taich A."/>
            <person name="Trevaskis E."/>
            <person name="Vignati D."/>
            <person name="Wilcox L."/>
            <person name="Wohldman P."/>
            <person name="Vaudin M."/>
            <person name="Wilson R."/>
            <person name="Waterston R."/>
            <person name="Albermann K."/>
            <person name="Hani J."/>
            <person name="Heumann K."/>
            <person name="Kleine K."/>
            <person name="Mewes H.-W."/>
            <person name="Zollner A."/>
            <person name="Zaccaria P."/>
        </authorList>
    </citation>
    <scope>NUCLEOTIDE SEQUENCE [LARGE SCALE GENOMIC DNA]</scope>
    <source>
        <strain>ATCC 204508 / S288c</strain>
    </source>
</reference>
<reference key="2">
    <citation type="journal article" date="2014" name="G3 (Bethesda)">
        <title>The reference genome sequence of Saccharomyces cerevisiae: Then and now.</title>
        <authorList>
            <person name="Engel S.R."/>
            <person name="Dietrich F.S."/>
            <person name="Fisk D.G."/>
            <person name="Binkley G."/>
            <person name="Balakrishnan R."/>
            <person name="Costanzo M.C."/>
            <person name="Dwight S.S."/>
            <person name="Hitz B.C."/>
            <person name="Karra K."/>
            <person name="Nash R.S."/>
            <person name="Weng S."/>
            <person name="Wong E.D."/>
            <person name="Lloyd P."/>
            <person name="Skrzypek M.S."/>
            <person name="Miyasato S.R."/>
            <person name="Simison M."/>
            <person name="Cherry J.M."/>
        </authorList>
    </citation>
    <scope>GENOME REANNOTATION</scope>
    <source>
        <strain>ATCC 204508 / S288c</strain>
    </source>
</reference>
<reference key="3">
    <citation type="journal article" date="1998" name="J. Cell Biol.">
        <title>The septins are required for the mitosis-specific activation of the Gin4 kinase.</title>
        <authorList>
            <person name="Carroll C.W."/>
            <person name="Altman R."/>
            <person name="Schieltz D."/>
            <person name="Yates J.R. III"/>
            <person name="Kellogg D."/>
        </authorList>
    </citation>
    <scope>CHARACTERIZATION</scope>
    <scope>INTERACTION WITH GIN4</scope>
</reference>
<reference key="4">
    <citation type="journal article" date="1998" name="Biochem. Biophys. Res. Commun.">
        <title>Shs1p: a novel member of septin that interacts with spa2p, involved in polarized growth in Saccharomyces cerevisiae.</title>
        <authorList>
            <person name="Mino A."/>
            <person name="Tanaka K."/>
            <person name="Kamei T."/>
            <person name="Umikawa M."/>
            <person name="Fujiwara T."/>
            <person name="Takai Y."/>
        </authorList>
    </citation>
    <scope>FUNCTION</scope>
    <scope>SUBCELLULAR LOCATION</scope>
    <scope>INTERACTION WITH SPA2</scope>
</reference>
<reference key="5">
    <citation type="journal article" date="1999" name="J. Cell Biol.">
        <title>Cell cycle-regulated attachment of the ubiquitin-related protein SUMO to the yeast septins.</title>
        <authorList>
            <person name="Johnson E.S."/>
            <person name="Blobel G."/>
        </authorList>
    </citation>
    <scope>SUMOYLATION AT LYS-426 AND LYS-437</scope>
    <scope>MUTAGENESIS OF LYS-426 AND LYS-437</scope>
</reference>
<reference key="6">
    <citation type="journal article" date="2002" name="Mol. Biol. Cell">
        <title>Cell cycle-dependent assembly of a Gin4-septin complex.</title>
        <authorList>
            <person name="Mortensen E.M."/>
            <person name="McDonald H."/>
            <person name="Yates J. III"/>
            <person name="Kellogg D.R."/>
        </authorList>
    </citation>
    <scope>PHOSPHORYLATION BY GIN4</scope>
    <scope>IDENTIFICATION BY MASS SPECTROMETRY</scope>
    <scope>IDENTIFICATION IN THE GIN4 COMPLEX</scope>
</reference>
<reference key="7">
    <citation type="journal article" date="2003" name="Dev. Cell">
        <title>Phosphorylation-dependent regulation of septin dynamics during the cell cycle.</title>
        <authorList>
            <person name="Dobbelaere J."/>
            <person name="Gentry M.S."/>
            <person name="Hallberg R.L."/>
            <person name="Barral Y."/>
        </authorList>
    </citation>
    <scope>PHOSPHORYLATION</scope>
</reference>
<reference key="8">
    <citation type="journal article" date="2003" name="Nature">
        <title>Global analysis of protein localization in budding yeast.</title>
        <authorList>
            <person name="Huh W.-K."/>
            <person name="Falvo J.V."/>
            <person name="Gerke L.C."/>
            <person name="Carroll A.S."/>
            <person name="Howson R.W."/>
            <person name="Weissman J.S."/>
            <person name="O'Shea E.K."/>
        </authorList>
    </citation>
    <scope>SUBCELLULAR LOCATION [LARGE SCALE ANALYSIS]</scope>
</reference>
<reference key="9">
    <citation type="journal article" date="2003" name="Nature">
        <title>Global analysis of protein expression in yeast.</title>
        <authorList>
            <person name="Ghaemmaghami S."/>
            <person name="Huh W.-K."/>
            <person name="Bower K."/>
            <person name="Howson R.W."/>
            <person name="Belle A."/>
            <person name="Dephoure N."/>
            <person name="O'Shea E.K."/>
            <person name="Weissman J.S."/>
        </authorList>
    </citation>
    <scope>LEVEL OF PROTEIN EXPRESSION [LARGE SCALE ANALYSIS]</scope>
</reference>
<reference key="10">
    <citation type="journal article" date="2004" name="Mol. Biol. Cell">
        <title>Protein-protein interactions governing septin heteropentamer assembly and septin filament organization in Saccharomyces cerevisiae.</title>
        <authorList>
            <person name="Versele M."/>
            <person name="Gullbrand B."/>
            <person name="Shulewitz M.J."/>
            <person name="Cid V.J."/>
            <person name="Bahmanyar S."/>
            <person name="Chen R.E."/>
            <person name="Barth P."/>
            <person name="Alber T."/>
            <person name="Thorner J."/>
        </authorList>
    </citation>
    <scope>INTERACTION WITH CDC11</scope>
    <scope>ASSEMBLY OF THE SEPTIN FILAMENTS</scope>
</reference>
<reference key="11">
    <citation type="journal article" date="2005" name="Mol. Cell. Proteomics">
        <title>Quantitative phosphoproteomics applied to the yeast pheromone signaling pathway.</title>
        <authorList>
            <person name="Gruhler A."/>
            <person name="Olsen J.V."/>
            <person name="Mohammed S."/>
            <person name="Mortensen P."/>
            <person name="Faergeman N.J."/>
            <person name="Mann M."/>
            <person name="Jensen O.N."/>
        </authorList>
    </citation>
    <scope>PHOSPHORYLATION [LARGE SCALE ANALYSIS] AT SER-447</scope>
    <scope>IDENTIFICATION BY MASS SPECTROMETRY [LARGE SCALE ANALYSIS]</scope>
    <source>
        <strain>YAL6B</strain>
    </source>
</reference>
<reference key="12">
    <citation type="journal article" date="2007" name="J. Proteome Res.">
        <title>Large-scale phosphorylation analysis of alpha-factor-arrested Saccharomyces cerevisiae.</title>
        <authorList>
            <person name="Li X."/>
            <person name="Gerber S.A."/>
            <person name="Rudner A.D."/>
            <person name="Beausoleil S.A."/>
            <person name="Haas W."/>
            <person name="Villen J."/>
            <person name="Elias J.E."/>
            <person name="Gygi S.P."/>
        </authorList>
    </citation>
    <scope>PHOSPHORYLATION [LARGE SCALE ANALYSIS] AT SER-416; SER-447; SER-519; SER-525; SER-545 AND SER-548</scope>
    <scope>IDENTIFICATION BY MASS SPECTROMETRY [LARGE SCALE ANALYSIS]</scope>
    <source>
        <strain>ADR376</strain>
    </source>
</reference>
<reference key="13">
    <citation type="journal article" date="2008" name="Mol. Cell. Proteomics">
        <title>A multidimensional chromatography technology for in-depth phosphoproteome analysis.</title>
        <authorList>
            <person name="Albuquerque C.P."/>
            <person name="Smolka M.B."/>
            <person name="Payne S.H."/>
            <person name="Bafna V."/>
            <person name="Eng J."/>
            <person name="Zhou H."/>
        </authorList>
    </citation>
    <scope>PHOSPHORYLATION [LARGE SCALE ANALYSIS] AT SER-408; SER-416; SER-447; SER-545 AND SER-548</scope>
    <scope>IDENTIFICATION BY MASS SPECTROMETRY [LARGE SCALE ANALYSIS]</scope>
</reference>
<reference key="14">
    <citation type="journal article" date="2009" name="Science">
        <title>Global analysis of Cdk1 substrate phosphorylation sites provides insights into evolution.</title>
        <authorList>
            <person name="Holt L.J."/>
            <person name="Tuch B.B."/>
            <person name="Villen J."/>
            <person name="Johnson A.D."/>
            <person name="Gygi S.P."/>
            <person name="Morgan D.O."/>
        </authorList>
    </citation>
    <scope>PHOSPHORYLATION [LARGE SCALE ANALYSIS] AT TYR-400; SER-408; SER-416; SER-447; SER-460; SER-519; SER-520; SER-522; SER-525; THR-539; SER-545 AND SER-548</scope>
    <scope>IDENTIFICATION BY MASS SPECTROMETRY [LARGE SCALE ANALYSIS]</scope>
</reference>
<reference key="15">
    <citation type="journal article" date="2012" name="Proc. Natl. Acad. Sci. U.S.A.">
        <title>N-terminal acetylome analyses and functional insights of the N-terminal acetyltransferase NatB.</title>
        <authorList>
            <person name="Van Damme P."/>
            <person name="Lasa M."/>
            <person name="Polevoda B."/>
            <person name="Gazquez C."/>
            <person name="Elosegui-Artola A."/>
            <person name="Kim D.S."/>
            <person name="De Juan-Pardo E."/>
            <person name="Demeyer K."/>
            <person name="Hole K."/>
            <person name="Larrea E."/>
            <person name="Timmerman E."/>
            <person name="Prieto J."/>
            <person name="Arnesen T."/>
            <person name="Sherman F."/>
            <person name="Gevaert K."/>
            <person name="Aldabe R."/>
        </authorList>
    </citation>
    <scope>ACETYLATION [LARGE SCALE ANALYSIS] AT SER-2</scope>
    <scope>CLEAVAGE OF INITIATOR METHIONINE [LARGE SCALE ANALYSIS]</scope>
    <scope>IDENTIFICATION BY MASS SPECTROMETRY [LARGE SCALE ANALYSIS]</scope>
</reference>
<reference key="16">
    <citation type="journal article" date="2015" name="Genetics">
        <title>The carboxy-terminal tails of septins Cdc11 and Shs1 recruit myosin-II binding factor Bni5 to the bud neck in Saccharomyces cerevisiae.</title>
        <authorList>
            <person name="Finnigan G.C."/>
            <person name="Booth E.A."/>
            <person name="Duvalyan A."/>
            <person name="Liao E.N."/>
            <person name="Thorner J."/>
        </authorList>
    </citation>
    <scope>FUNCTION</scope>
    <scope>DOMAIN</scope>
    <scope>SUBCELLULAR LOCATION</scope>
    <scope>INTERACTION WITH BNI5</scope>
</reference>
<organism>
    <name type="scientific">Saccharomyces cerevisiae (strain ATCC 204508 / S288c)</name>
    <name type="common">Baker's yeast</name>
    <dbReference type="NCBI Taxonomy" id="559292"/>
    <lineage>
        <taxon>Eukaryota</taxon>
        <taxon>Fungi</taxon>
        <taxon>Dikarya</taxon>
        <taxon>Ascomycota</taxon>
        <taxon>Saccharomycotina</taxon>
        <taxon>Saccharomycetes</taxon>
        <taxon>Saccharomycetales</taxon>
        <taxon>Saccharomycetaceae</taxon>
        <taxon>Saccharomyces</taxon>
    </lineage>
</organism>
<accession>Q07657</accession>
<accession>D6VRD0</accession>
<proteinExistence type="evidence at protein level"/>
<feature type="initiator methionine" description="Removed" evidence="21">
    <location>
        <position position="1"/>
    </location>
</feature>
<feature type="chain" id="PRO_0000173545" description="Seventh homolog of septin 1">
    <location>
        <begin position="2"/>
        <end position="551"/>
    </location>
</feature>
<feature type="domain" description="Septin-type G" evidence="4">
    <location>
        <begin position="20"/>
        <end position="339"/>
    </location>
</feature>
<feature type="region of interest" description="G1 motif" evidence="4">
    <location>
        <begin position="30"/>
        <end position="37"/>
    </location>
</feature>
<feature type="region of interest" description="G3 motif" evidence="4">
    <location>
        <begin position="135"/>
        <end position="138"/>
    </location>
</feature>
<feature type="region of interest" description="G4 motif" evidence="4">
    <location>
        <begin position="217"/>
        <end position="220"/>
    </location>
</feature>
<feature type="region of interest" description="Disordered" evidence="5">
    <location>
        <begin position="381"/>
        <end position="417"/>
    </location>
</feature>
<feature type="region of interest" description="Disordered" evidence="5">
    <location>
        <begin position="515"/>
        <end position="551"/>
    </location>
</feature>
<feature type="coiled-coil region" evidence="3">
    <location>
        <begin position="418"/>
        <end position="518"/>
    </location>
</feature>
<feature type="compositionally biased region" description="Low complexity" evidence="5">
    <location>
        <begin position="519"/>
        <end position="532"/>
    </location>
</feature>
<feature type="binding site" evidence="2">
    <location>
        <begin position="30"/>
        <end position="37"/>
    </location>
    <ligand>
        <name>GTP</name>
        <dbReference type="ChEBI" id="CHEBI:37565"/>
    </ligand>
</feature>
<feature type="binding site" evidence="2">
    <location>
        <position position="138"/>
    </location>
    <ligand>
        <name>GTP</name>
        <dbReference type="ChEBI" id="CHEBI:37565"/>
    </ligand>
</feature>
<feature type="binding site" evidence="2">
    <location>
        <begin position="218"/>
        <end position="226"/>
    </location>
    <ligand>
        <name>GTP</name>
        <dbReference type="ChEBI" id="CHEBI:37565"/>
    </ligand>
</feature>
<feature type="binding site" evidence="2">
    <location>
        <position position="288"/>
    </location>
    <ligand>
        <name>GTP</name>
        <dbReference type="ChEBI" id="CHEBI:37565"/>
    </ligand>
</feature>
<feature type="modified residue" description="N-acetylserine" evidence="21">
    <location>
        <position position="2"/>
    </location>
</feature>
<feature type="modified residue" description="Phosphotyrosine" evidence="20">
    <location>
        <position position="400"/>
    </location>
</feature>
<feature type="modified residue" description="Phosphoserine" evidence="19 20">
    <location>
        <position position="408"/>
    </location>
</feature>
<feature type="modified residue" description="Phosphoserine" evidence="18 19 20">
    <location>
        <position position="416"/>
    </location>
</feature>
<feature type="modified residue" description="Phosphoserine" evidence="17 18 19 20">
    <location>
        <position position="447"/>
    </location>
</feature>
<feature type="modified residue" description="Phosphoserine" evidence="20">
    <location>
        <position position="460"/>
    </location>
</feature>
<feature type="modified residue" description="Phosphoserine" evidence="18 20">
    <location>
        <position position="519"/>
    </location>
</feature>
<feature type="modified residue" description="Phosphoserine" evidence="20">
    <location>
        <position position="520"/>
    </location>
</feature>
<feature type="modified residue" description="Phosphoserine" evidence="20">
    <location>
        <position position="522"/>
    </location>
</feature>
<feature type="modified residue" description="Phosphoserine" evidence="18 20">
    <location>
        <position position="525"/>
    </location>
</feature>
<feature type="modified residue" description="Phosphothreonine" evidence="20">
    <location>
        <position position="539"/>
    </location>
</feature>
<feature type="modified residue" description="Phosphoserine" evidence="18 19 20">
    <location>
        <position position="545"/>
    </location>
</feature>
<feature type="modified residue" description="Phosphoserine" evidence="18 19 20">
    <location>
        <position position="548"/>
    </location>
</feature>
<feature type="cross-link" description="Glycyl lysine isopeptide (Lys-Gly) (interchain with G-Cter in SUMO)">
    <location>
        <position position="426"/>
    </location>
</feature>
<feature type="cross-link" description="Glycyl lysine isopeptide (Lys-Gly) (interchain with G-Cter in SUMO)">
    <location>
        <position position="437"/>
    </location>
</feature>
<feature type="mutagenesis site" description="Abolishes sumoylation in vitro; when associated with R-437." evidence="6">
    <original>K</original>
    <variation>R</variation>
    <location>
        <position position="426"/>
    </location>
</feature>
<feature type="mutagenesis site" description="Abolishes sumoylation in vitro; when associated with R-426." evidence="6">
    <original>K</original>
    <variation>R</variation>
    <location>
        <position position="437"/>
    </location>
</feature>
<feature type="strand" evidence="22">
    <location>
        <begin position="23"/>
        <end position="29"/>
    </location>
</feature>
<feature type="helix" evidence="22">
    <location>
        <begin position="36"/>
        <end position="44"/>
    </location>
</feature>
<feature type="strand" evidence="22">
    <location>
        <begin position="64"/>
        <end position="67"/>
    </location>
</feature>
<feature type="strand" evidence="22">
    <location>
        <begin position="71"/>
        <end position="80"/>
    </location>
</feature>
<feature type="helix" evidence="22">
    <location>
        <begin position="94"/>
        <end position="96"/>
    </location>
</feature>
<feature type="strand" evidence="22">
    <location>
        <begin position="103"/>
        <end position="112"/>
    </location>
</feature>
<feature type="strand" evidence="22">
    <location>
        <begin position="129"/>
        <end position="138"/>
    </location>
</feature>
<feature type="strand" evidence="22">
    <location>
        <begin position="141"/>
        <end position="144"/>
    </location>
</feature>
<feature type="helix" evidence="22">
    <location>
        <begin position="146"/>
        <end position="167"/>
    </location>
</feature>
<feature type="strand" evidence="22">
    <location>
        <begin position="183"/>
        <end position="188"/>
    </location>
</feature>
<feature type="helix" evidence="22">
    <location>
        <begin position="197"/>
        <end position="209"/>
    </location>
</feature>
<feature type="strand" evidence="22">
    <location>
        <begin position="210"/>
        <end position="217"/>
    </location>
</feature>
<feature type="helix" evidence="22">
    <location>
        <begin position="219"/>
        <end position="221"/>
    </location>
</feature>
<feature type="helix" evidence="22">
    <location>
        <begin position="224"/>
        <end position="241"/>
    </location>
</feature>
<feature type="helix" evidence="22">
    <location>
        <begin position="257"/>
        <end position="269"/>
    </location>
</feature>
<feature type="strand" evidence="22">
    <location>
        <begin position="271"/>
        <end position="274"/>
    </location>
</feature>
<feature type="strand" evidence="22">
    <location>
        <begin position="286"/>
        <end position="289"/>
    </location>
</feature>
<feature type="strand" evidence="22">
    <location>
        <begin position="294"/>
        <end position="296"/>
    </location>
</feature>
<feature type="turn" evidence="22">
    <location>
        <begin position="300"/>
        <end position="302"/>
    </location>
</feature>
<feature type="helix" evidence="22">
    <location>
        <begin position="305"/>
        <end position="313"/>
    </location>
</feature>
<feature type="turn" evidence="22">
    <location>
        <begin position="314"/>
        <end position="316"/>
    </location>
</feature>
<feature type="helix" evidence="22">
    <location>
        <begin position="317"/>
        <end position="326"/>
    </location>
</feature>
<feature type="helix" evidence="22">
    <location>
        <begin position="328"/>
        <end position="338"/>
    </location>
</feature>
<gene>
    <name evidence="15" type="primary">SHS1</name>
    <name type="synonym">SEP7</name>
    <name type="ordered locus">YDL225W</name>
</gene>
<name>SHS1_YEAST</name>
<comment type="function">
    <text evidence="12 13">Septins are GTPases involved in cytokinesis that assemble early in the cell cycle as a patch at the incipient bud site and form a ring approximately 15 minutes before bud emergence, which transforms into an hour-glass shaped collar of cortical filaments that spans both sides of the mother-bud neck (PubMed:9790978). This collar persists until just before cytokinesis, when it splits into two rings that occupy opposite sides of the neck (PubMed:9790978). The septins at the bud neck serve as a structural scaffold that recruits different components involved in diverse processes at specific stages during the cell cycle (PubMed:9790978). Many proteins bind asymmetrically to the septin collar (PubMed:9790978). The septin assembly is regulated by protein kinases GIN4 and/or CLA4 (PubMed:9790978). May act by recruiting MYO1 and HOF1, a protein involved in septation, to the site of cleavage (PubMed:9790978). Septins are also involved in cell morphogenesis, bud site selection, chitin deposition, cell cycle regulation, cell compartmentalization and spore wall formation (PubMed:9790978). CDCd11 with SHS1 11 are involved in the recruitment of BNI5 and thereby ensure efficient localization at the bud neck of MYO1, the type II myosin of the actomyosin contractile ring (PubMed:25971666).</text>
</comment>
<comment type="subunit">
    <text evidence="11 13 14">Component of the septin complex which consists of CDC3, CDC10, CDC11, CDC12 and probably SHS1 and rearranges to a cortical collar of highly ordered filaments at the mother-bud-neck (PubMed:9813092). A complex formed by CDC3, CDC10, CDC11 and CDC12 is capable of forming long filaments in vitro and the components seem to be present in a 2:2:2:2 arrangement in vivo (PubMed:9813092). The filaments are proposed to be formed by the end-to-end polymerization of CDC3-CDC12-CDC11 complexes with CDC10 serving as a bridge to bundle the polymers into paired filaments (PubMed:9813092). Component of the GIN4 complex composed of at least BNI5, CDC3, CDC10, CDC11, CDC12, GIN4, NAP1 and SHS1 (PubMed:15282341, PubMed:9813092). Self-associates (PubMed:9813092). Interacts with CDC11 and SPA2 (PubMed:15282341, PubMed:9790978).</text>
</comment>
<comment type="interaction">
    <interactant intactId="EBI-22083">
        <id>Q07657</id>
    </interactant>
    <interactant intactId="EBI-4178">
        <id>P32458</id>
        <label>CDC11</label>
    </interactant>
    <organismsDiffer>false</organismsDiffer>
    <experiments>6</experiments>
</comment>
<comment type="interaction">
    <interactant intactId="EBI-22083">
        <id>Q07657</id>
    </interactant>
    <interactant intactId="EBI-4182">
        <id>P32468</id>
        <label>CDC12</label>
    </interactant>
    <organismsDiffer>false</organismsDiffer>
    <experiments>5</experiments>
</comment>
<comment type="interaction">
    <interactant intactId="EBI-22083">
        <id>Q07657</id>
    </interactant>
    <interactant intactId="EBI-7595">
        <id>Q12263</id>
        <label>GIN4</label>
    </interactant>
    <organismsDiffer>false</organismsDiffer>
    <experiments>8</experiments>
</comment>
<comment type="interaction">
    <interactant intactId="EBI-22083">
        <id>Q07657</id>
    </interactant>
    <interactant intactId="EBI-16735">
        <id>P40075</id>
        <label>SCS2</label>
    </interactant>
    <organismsDiffer>false</organismsDiffer>
    <experiments>4</experiments>
</comment>
<comment type="interaction">
    <interactant intactId="EBI-22083">
        <id>Q07657</id>
    </interactant>
    <interactant intactId="EBI-27256">
        <id>P39523</id>
        <label>YMR124W</label>
    </interactant>
    <organismsDiffer>false</organismsDiffer>
    <experiments>5</experiments>
</comment>
<comment type="subcellular location">
    <subcellularLocation>
        <location evidence="16">Membrane</location>
        <topology evidence="16">Peripheral membrane protein</topology>
    </subcellularLocation>
    <subcellularLocation>
        <location evidence="9 12 13">Bud neck</location>
    </subcellularLocation>
    <text evidence="1">Present at the bud neck during cell division. Probably interacts with phosphoinosides such as phosphatidylinositol 4-phosphate or phosphatidylinositol 5-phosphate.</text>
</comment>
<comment type="domain">
    <text evidence="12">The C-terminal extension (CTE) that contains a coiled coil is important for the recruitment of BNI5 and subsequent localization at the bud neck of MYO1.</text>
</comment>
<comment type="PTM">
    <text evidence="7 8">Phosphorylated by GIN4 and CLA4. Phosphorylation state is essential for septin ring dynamics during telophase.</text>
</comment>
<comment type="PTM">
    <text evidence="6">Sumoylated during mitosis on the mother cell side of the bud neck. Sumoylation probably plays a central role in regulating septin ring disassembly during the cell cycle.</text>
</comment>
<comment type="miscellaneous">
    <text evidence="10">Present with 5620 molecules/cell in log phase SD medium.</text>
</comment>
<comment type="similarity">
    <text evidence="4">Belongs to the TRAFAC class TrmE-Era-EngA-EngB-Septin-like GTPase superfamily. Septin GTPase family.</text>
</comment>
<keyword id="KW-0002">3D-structure</keyword>
<keyword id="KW-0007">Acetylation</keyword>
<keyword id="KW-0131">Cell cycle</keyword>
<keyword id="KW-0132">Cell division</keyword>
<keyword id="KW-0175">Coiled coil</keyword>
<keyword id="KW-0342">GTP-binding</keyword>
<keyword id="KW-1017">Isopeptide bond</keyword>
<keyword id="KW-0472">Membrane</keyword>
<keyword id="KW-0547">Nucleotide-binding</keyword>
<keyword id="KW-0597">Phosphoprotein</keyword>
<keyword id="KW-1185">Reference proteome</keyword>
<keyword id="KW-0832">Ubl conjugation</keyword>
<protein>
    <recommendedName>
        <fullName evidence="15">Seventh homolog of septin 1</fullName>
    </recommendedName>
    <alternativeName>
        <fullName>Septation protein 7</fullName>
    </alternativeName>
</protein>